<comment type="function">
    <text evidence="1">Specifically methylates the N4 position of cytidine in position 1402 (C1402) of 16S rRNA.</text>
</comment>
<comment type="catalytic activity">
    <reaction evidence="1">
        <text>cytidine(1402) in 16S rRNA + S-adenosyl-L-methionine = N(4)-methylcytidine(1402) in 16S rRNA + S-adenosyl-L-homocysteine + H(+)</text>
        <dbReference type="Rhea" id="RHEA:42928"/>
        <dbReference type="Rhea" id="RHEA-COMP:10286"/>
        <dbReference type="Rhea" id="RHEA-COMP:10287"/>
        <dbReference type="ChEBI" id="CHEBI:15378"/>
        <dbReference type="ChEBI" id="CHEBI:57856"/>
        <dbReference type="ChEBI" id="CHEBI:59789"/>
        <dbReference type="ChEBI" id="CHEBI:74506"/>
        <dbReference type="ChEBI" id="CHEBI:82748"/>
        <dbReference type="EC" id="2.1.1.199"/>
    </reaction>
</comment>
<comment type="subcellular location">
    <subcellularLocation>
        <location evidence="1">Cytoplasm</location>
    </subcellularLocation>
</comment>
<comment type="similarity">
    <text evidence="1">Belongs to the methyltransferase superfamily. RsmH family.</text>
</comment>
<name>RSMH_WOLPP</name>
<proteinExistence type="inferred from homology"/>
<evidence type="ECO:0000255" key="1">
    <source>
        <dbReference type="HAMAP-Rule" id="MF_01007"/>
    </source>
</evidence>
<dbReference type="EC" id="2.1.1.199" evidence="1"/>
<dbReference type="EMBL" id="AM999887">
    <property type="protein sequence ID" value="CAQ55035.1"/>
    <property type="molecule type" value="Genomic_DNA"/>
</dbReference>
<dbReference type="RefSeq" id="WP_007302319.1">
    <property type="nucleotide sequence ID" value="NC_010981.1"/>
</dbReference>
<dbReference type="SMR" id="B3CMB5"/>
<dbReference type="KEGG" id="wpi:WP0927"/>
<dbReference type="eggNOG" id="COG0275">
    <property type="taxonomic scope" value="Bacteria"/>
</dbReference>
<dbReference type="HOGENOM" id="CLU_038422_1_1_5"/>
<dbReference type="Proteomes" id="UP000008814">
    <property type="component" value="Chromosome"/>
</dbReference>
<dbReference type="GO" id="GO:0005737">
    <property type="term" value="C:cytoplasm"/>
    <property type="evidence" value="ECO:0007669"/>
    <property type="project" value="UniProtKB-SubCell"/>
</dbReference>
<dbReference type="GO" id="GO:0071424">
    <property type="term" value="F:rRNA (cytosine-N4-)-methyltransferase activity"/>
    <property type="evidence" value="ECO:0007669"/>
    <property type="project" value="UniProtKB-UniRule"/>
</dbReference>
<dbReference type="GO" id="GO:0070475">
    <property type="term" value="P:rRNA base methylation"/>
    <property type="evidence" value="ECO:0007669"/>
    <property type="project" value="UniProtKB-UniRule"/>
</dbReference>
<dbReference type="Gene3D" id="1.10.150.170">
    <property type="entry name" value="Putative methyltransferase TM0872, insert domain"/>
    <property type="match status" value="1"/>
</dbReference>
<dbReference type="Gene3D" id="3.40.50.150">
    <property type="entry name" value="Vaccinia Virus protein VP39"/>
    <property type="match status" value="1"/>
</dbReference>
<dbReference type="HAMAP" id="MF_01007">
    <property type="entry name" value="16SrRNA_methyltr_H"/>
    <property type="match status" value="1"/>
</dbReference>
<dbReference type="InterPro" id="IPR002903">
    <property type="entry name" value="RsmH"/>
</dbReference>
<dbReference type="InterPro" id="IPR023397">
    <property type="entry name" value="SAM-dep_MeTrfase_MraW_recog"/>
</dbReference>
<dbReference type="InterPro" id="IPR029063">
    <property type="entry name" value="SAM-dependent_MTases_sf"/>
</dbReference>
<dbReference type="NCBIfam" id="TIGR00006">
    <property type="entry name" value="16S rRNA (cytosine(1402)-N(4))-methyltransferase RsmH"/>
    <property type="match status" value="1"/>
</dbReference>
<dbReference type="PANTHER" id="PTHR11265:SF0">
    <property type="entry name" value="12S RRNA N4-METHYLCYTIDINE METHYLTRANSFERASE"/>
    <property type="match status" value="1"/>
</dbReference>
<dbReference type="PANTHER" id="PTHR11265">
    <property type="entry name" value="S-ADENOSYL-METHYLTRANSFERASE MRAW"/>
    <property type="match status" value="1"/>
</dbReference>
<dbReference type="Pfam" id="PF01795">
    <property type="entry name" value="Methyltransf_5"/>
    <property type="match status" value="1"/>
</dbReference>
<dbReference type="PIRSF" id="PIRSF004486">
    <property type="entry name" value="MraW"/>
    <property type="match status" value="1"/>
</dbReference>
<dbReference type="SUPFAM" id="SSF81799">
    <property type="entry name" value="Putative methyltransferase TM0872, insert domain"/>
    <property type="match status" value="1"/>
</dbReference>
<dbReference type="SUPFAM" id="SSF53335">
    <property type="entry name" value="S-adenosyl-L-methionine-dependent methyltransferases"/>
    <property type="match status" value="1"/>
</dbReference>
<sequence length="294" mass="32983">MTHIPVLLKEMLLQLSPHSGGIYVDATFGAGGYSKAILESADCKVYAVDRDETVTKFYDDLNVKYPNRIKLFIEKFSNIKNLLDSNNIKGINGIVFDVGVSSMQLDNGDRGFSFLRDGPLNMSMDNYSHMNASTFVNALREEEIANTIYNYGGERHSRRIARAIVNARKKKIIKTTFELADIVRSVVFRGKSKIDPATRTFQAIRIWVNDELGELEKGIKAASEILSENGKLIVVTFHSLEDRIVKTVFKDLCEPGSTKTFSLLNKKVIKASSEEINVNPRARSAKLRAIQRLS</sequence>
<gene>
    <name evidence="1" type="primary">rsmH</name>
    <name type="synonym">mraW</name>
    <name type="ordered locus">WP0927</name>
</gene>
<reference key="1">
    <citation type="journal article" date="2008" name="Mol. Biol. Evol.">
        <title>Genome evolution of Wolbachia strain wPip from the Culex pipiens group.</title>
        <authorList>
            <person name="Klasson L."/>
            <person name="Walker T."/>
            <person name="Sebaihia M."/>
            <person name="Sanders M.J."/>
            <person name="Quail M.A."/>
            <person name="Lord A."/>
            <person name="Sanders S."/>
            <person name="Earl J."/>
            <person name="O'Neill S.L."/>
            <person name="Thomson N."/>
            <person name="Sinkins S.P."/>
            <person name="Parkhill J."/>
        </authorList>
    </citation>
    <scope>NUCLEOTIDE SEQUENCE [LARGE SCALE GENOMIC DNA]</scope>
    <source>
        <strain>wPip</strain>
    </source>
</reference>
<accession>B3CMB5</accession>
<keyword id="KW-0963">Cytoplasm</keyword>
<keyword id="KW-0489">Methyltransferase</keyword>
<keyword id="KW-0698">rRNA processing</keyword>
<keyword id="KW-0949">S-adenosyl-L-methionine</keyword>
<keyword id="KW-0808">Transferase</keyword>
<organism>
    <name type="scientific">Wolbachia pipientis subsp. Culex pipiens (strain wPip)</name>
    <dbReference type="NCBI Taxonomy" id="570417"/>
    <lineage>
        <taxon>Bacteria</taxon>
        <taxon>Pseudomonadati</taxon>
        <taxon>Pseudomonadota</taxon>
        <taxon>Alphaproteobacteria</taxon>
        <taxon>Rickettsiales</taxon>
        <taxon>Anaplasmataceae</taxon>
        <taxon>Wolbachieae</taxon>
        <taxon>Wolbachia</taxon>
    </lineage>
</organism>
<protein>
    <recommendedName>
        <fullName evidence="1">Ribosomal RNA small subunit methyltransferase H</fullName>
        <ecNumber evidence="1">2.1.1.199</ecNumber>
    </recommendedName>
    <alternativeName>
        <fullName evidence="1">16S rRNA m(4)C1402 methyltransferase</fullName>
    </alternativeName>
    <alternativeName>
        <fullName evidence="1">rRNA (cytosine-N(4)-)-methyltransferase RsmH</fullName>
    </alternativeName>
</protein>
<feature type="chain" id="PRO_1000134765" description="Ribosomal RNA small subunit methyltransferase H">
    <location>
        <begin position="1"/>
        <end position="294"/>
    </location>
</feature>
<feature type="binding site" evidence="1">
    <location>
        <begin position="31"/>
        <end position="33"/>
    </location>
    <ligand>
        <name>S-adenosyl-L-methionine</name>
        <dbReference type="ChEBI" id="CHEBI:59789"/>
    </ligand>
</feature>
<feature type="binding site" evidence="1">
    <location>
        <position position="49"/>
    </location>
    <ligand>
        <name>S-adenosyl-L-methionine</name>
        <dbReference type="ChEBI" id="CHEBI:59789"/>
    </ligand>
</feature>
<feature type="binding site" evidence="1">
    <location>
        <position position="76"/>
    </location>
    <ligand>
        <name>S-adenosyl-L-methionine</name>
        <dbReference type="ChEBI" id="CHEBI:59789"/>
    </ligand>
</feature>
<feature type="binding site" evidence="1">
    <location>
        <position position="97"/>
    </location>
    <ligand>
        <name>S-adenosyl-L-methionine</name>
        <dbReference type="ChEBI" id="CHEBI:59789"/>
    </ligand>
</feature>
<feature type="binding site" evidence="1">
    <location>
        <position position="104"/>
    </location>
    <ligand>
        <name>S-adenosyl-L-methionine</name>
        <dbReference type="ChEBI" id="CHEBI:59789"/>
    </ligand>
</feature>